<organism>
    <name type="scientific">Staphylococcus haemolyticus (strain JCSC1435)</name>
    <dbReference type="NCBI Taxonomy" id="279808"/>
    <lineage>
        <taxon>Bacteria</taxon>
        <taxon>Bacillati</taxon>
        <taxon>Bacillota</taxon>
        <taxon>Bacilli</taxon>
        <taxon>Bacillales</taxon>
        <taxon>Staphylococcaceae</taxon>
        <taxon>Staphylococcus</taxon>
    </lineage>
</organism>
<name>CRTP_STAHJ</name>
<reference key="1">
    <citation type="journal article" date="2005" name="J. Bacteriol.">
        <title>Whole-genome sequencing of Staphylococcus haemolyticus uncovers the extreme plasticity of its genome and the evolution of human-colonizing staphylococcal species.</title>
        <authorList>
            <person name="Takeuchi F."/>
            <person name="Watanabe S."/>
            <person name="Baba T."/>
            <person name="Yuzawa H."/>
            <person name="Ito T."/>
            <person name="Morimoto Y."/>
            <person name="Kuroda M."/>
            <person name="Cui L."/>
            <person name="Takahashi M."/>
            <person name="Ankai A."/>
            <person name="Baba S."/>
            <person name="Fukui S."/>
            <person name="Lee J.C."/>
            <person name="Hiramatsu K."/>
        </authorList>
    </citation>
    <scope>NUCLEOTIDE SEQUENCE [LARGE SCALE GENOMIC DNA]</scope>
    <source>
        <strain>JCSC1435</strain>
    </source>
</reference>
<evidence type="ECO:0000250" key="1">
    <source>
        <dbReference type="UniProtKB" id="P21685"/>
    </source>
</evidence>
<evidence type="ECO:0000250" key="2">
    <source>
        <dbReference type="UniProtKB" id="Q2FV57"/>
    </source>
</evidence>
<evidence type="ECO:0000255" key="3"/>
<keyword id="KW-0125">Carotenoid biosynthesis</keyword>
<keyword id="KW-0274">FAD</keyword>
<keyword id="KW-0285">Flavoprotein</keyword>
<keyword id="KW-0560">Oxidoreductase</keyword>
<keyword id="KW-0843">Virulence</keyword>
<dbReference type="EC" id="1.14.99.-" evidence="2"/>
<dbReference type="EMBL" id="AP006716">
    <property type="protein sequence ID" value="BAE03797.1"/>
    <property type="molecule type" value="Genomic_DNA"/>
</dbReference>
<dbReference type="RefSeq" id="WP_011274813.1">
    <property type="nucleotide sequence ID" value="NC_007168.1"/>
</dbReference>
<dbReference type="SMR" id="Q4L978"/>
<dbReference type="KEGG" id="sha:SH0488"/>
<dbReference type="eggNOG" id="COG1233">
    <property type="taxonomic scope" value="Bacteria"/>
</dbReference>
<dbReference type="HOGENOM" id="CLU_019722_2_1_9"/>
<dbReference type="OrthoDB" id="9814556at2"/>
<dbReference type="UniPathway" id="UPA00029">
    <property type="reaction ID" value="UER00558"/>
</dbReference>
<dbReference type="Proteomes" id="UP000000543">
    <property type="component" value="Chromosome"/>
</dbReference>
<dbReference type="GO" id="GO:0016491">
    <property type="term" value="F:oxidoreductase activity"/>
    <property type="evidence" value="ECO:0007669"/>
    <property type="project" value="UniProtKB-KW"/>
</dbReference>
<dbReference type="GO" id="GO:0016117">
    <property type="term" value="P:carotenoid biosynthetic process"/>
    <property type="evidence" value="ECO:0007669"/>
    <property type="project" value="UniProtKB-KW"/>
</dbReference>
<dbReference type="Gene3D" id="3.50.50.60">
    <property type="entry name" value="FAD/NAD(P)-binding domain"/>
    <property type="match status" value="2"/>
</dbReference>
<dbReference type="InterPro" id="IPR002937">
    <property type="entry name" value="Amino_oxidase"/>
</dbReference>
<dbReference type="InterPro" id="IPR014105">
    <property type="entry name" value="Carotenoid/retinoid_OxRdtase"/>
</dbReference>
<dbReference type="InterPro" id="IPR036188">
    <property type="entry name" value="FAD/NAD-bd_sf"/>
</dbReference>
<dbReference type="NCBIfam" id="TIGR02734">
    <property type="entry name" value="crtI_fam"/>
    <property type="match status" value="1"/>
</dbReference>
<dbReference type="PANTHER" id="PTHR43734:SF7">
    <property type="entry name" value="4,4'-DIAPONEUROSPORENE OXYGENASE"/>
    <property type="match status" value="1"/>
</dbReference>
<dbReference type="PANTHER" id="PTHR43734">
    <property type="entry name" value="PHYTOENE DESATURASE"/>
    <property type="match status" value="1"/>
</dbReference>
<dbReference type="Pfam" id="PF01593">
    <property type="entry name" value="Amino_oxidase"/>
    <property type="match status" value="1"/>
</dbReference>
<dbReference type="SUPFAM" id="SSF51905">
    <property type="entry name" value="FAD/NAD(P)-binding domain"/>
    <property type="match status" value="1"/>
</dbReference>
<gene>
    <name evidence="2" type="primary">crtP</name>
    <name type="ordered locus">SH0488</name>
</gene>
<protein>
    <recommendedName>
        <fullName evidence="2">4,4'-diaponeurosporene oxygenase</fullName>
        <ecNumber evidence="2">1.14.99.-</ecNumber>
    </recommendedName>
    <alternativeName>
        <fullName evidence="2">4,4'-diaponeurosporene oxidase</fullName>
    </alternativeName>
    <alternativeName>
        <fullName evidence="2">Carotenoid oxidase</fullName>
    </alternativeName>
</protein>
<accession>Q4L978</accession>
<feature type="chain" id="PRO_0000285233" description="4,4'-diaponeurosporene oxygenase">
    <location>
        <begin position="1"/>
        <end position="502"/>
    </location>
</feature>
<feature type="binding site" evidence="3">
    <location>
        <begin position="8"/>
        <end position="20"/>
    </location>
    <ligand>
        <name>FAD</name>
        <dbReference type="ChEBI" id="CHEBI:57692"/>
    </ligand>
</feature>
<sequence>MSQKKIIIIGGGLGGISAAIRLAQSGFDVSLYDKNNHIGGKVNRLETEGFGFDLGPSILTMPYIFENLFNYSDKQMKDYVTIERLPLQWRSFFTNGEVIDLYEDLSQMLNANTYLTNDDIQQLHQFLNYAEKIHRFTEKGYFALGLDKVSEIIKYQGLLRSLKGVDYFSTMQQAINRYIEKQKLRDMLGYFIKYVGSSSYDAPAVLTLLIHMQYEQGLWYVKGGIHKLAQALEQLAIEEGVAIHTGMDVCSIDTYFNHITGVRLDDGSHVSADYIVSNREVIPTYRDLLHFSNKKIAQLEKVYEPAASGYVMHLGVDKEYAQLAHHNFLFSNDSKRNYREVFHDKVLPQDPTIYLVNSNKSDPTQAPEGHENLKVLPHIPYIQNQPFTEEQYSDFRERVLDKLEKMGLTDLRQHIIYEDIWTPHDIERTYGSNKGAIYGVVADKKKNKGFKFPKQSEYFDNLFFVGGSVNPGGGMPMVTLSGQQVADKINALECKVTTDSRE</sequence>
<comment type="function">
    <text evidence="2">Involved in the biosynthesis of the yellow-orange carotenoid staphyloxanthin, which plays a role in the virulence via its protective function against oxidative stress. Catalyzes the oxidation of the terminal methyl side group of 4,4'-diaponeurosporene to form 4,4'-diaponeurosporen-4-al.</text>
</comment>
<comment type="catalytic activity">
    <reaction evidence="2">
        <text>all-trans-4,4'-diaponeurosporene + 2 AH2 + 2 O2 = 4,4'-diaponeurosporenal + 2 A + 3 H2O</text>
        <dbReference type="Rhea" id="RHEA:56104"/>
        <dbReference type="ChEBI" id="CHEBI:13193"/>
        <dbReference type="ChEBI" id="CHEBI:15377"/>
        <dbReference type="ChEBI" id="CHEBI:15379"/>
        <dbReference type="ChEBI" id="CHEBI:17499"/>
        <dbReference type="ChEBI" id="CHEBI:62743"/>
        <dbReference type="ChEBI" id="CHEBI:79065"/>
    </reaction>
</comment>
<comment type="cofactor">
    <cofactor evidence="1">
        <name>FAD</name>
        <dbReference type="ChEBI" id="CHEBI:57692"/>
    </cofactor>
</comment>
<comment type="pathway">
    <text evidence="2">Carotenoid biosynthesis; staphyloxanthin biosynthesis; staphyloxanthin from farnesyl diphosphate: step 3/5.</text>
</comment>
<comment type="similarity">
    <text evidence="2">Belongs to the carotenoid/retinoid oxidoreductase family. CrtP subfamily.</text>
</comment>
<proteinExistence type="inferred from homology"/>